<proteinExistence type="inferred from homology"/>
<evidence type="ECO:0000255" key="1">
    <source>
        <dbReference type="HAMAP-Rule" id="MF_00150"/>
    </source>
</evidence>
<sequence>MSKKIKVGIVGATGYTGVELLRLLAAHPDVEVAAVTSRSEAGTAVADYFPSLRGVYGLAFQTPDEAGLEQCDIVFFATPNGIAMKDAPRLIEQGVRVIDLSADFRIRDIPTWEHWYGMTHAAPDLVSQAVYGLSELNREAVAQARLVANPGCYPTCVSLPLVPLLRQCRLKPGMPLIADCKSGVSGAGRKGNVGSLLCEVGDNFKAYGIAGHRHLPEIRQTIAGLQDGIAEGFVFTPHLAPMIRGMHATVYLHLSDGICPETILRDYYRDSLFVDILPAGSTPETRSVRGANLCRISIQQAAQSDVWVVLSVIDNLVKGAAGQAVQNMNIMFGLKETHGLGAIPLLP</sequence>
<dbReference type="EC" id="1.2.1.38" evidence="1"/>
<dbReference type="EMBL" id="AL157959">
    <property type="protein sequence ID" value="CAM07936.1"/>
    <property type="molecule type" value="Genomic_DNA"/>
</dbReference>
<dbReference type="PIR" id="A81988">
    <property type="entry name" value="A81988"/>
</dbReference>
<dbReference type="RefSeq" id="WP_002232978.1">
    <property type="nucleotide sequence ID" value="NC_003116.1"/>
</dbReference>
<dbReference type="SMR" id="Q9JVU6"/>
<dbReference type="EnsemblBacteria" id="CAM07936">
    <property type="protein sequence ID" value="CAM07936"/>
    <property type="gene ID" value="NMA0676"/>
</dbReference>
<dbReference type="KEGG" id="nma:NMA0676"/>
<dbReference type="HOGENOM" id="CLU_006384_0_1_4"/>
<dbReference type="UniPathway" id="UPA00068">
    <property type="reaction ID" value="UER00108"/>
</dbReference>
<dbReference type="Proteomes" id="UP000000626">
    <property type="component" value="Chromosome"/>
</dbReference>
<dbReference type="GO" id="GO:0005737">
    <property type="term" value="C:cytoplasm"/>
    <property type="evidence" value="ECO:0007669"/>
    <property type="project" value="UniProtKB-SubCell"/>
</dbReference>
<dbReference type="GO" id="GO:0003942">
    <property type="term" value="F:N-acetyl-gamma-glutamyl-phosphate reductase activity"/>
    <property type="evidence" value="ECO:0007669"/>
    <property type="project" value="UniProtKB-UniRule"/>
</dbReference>
<dbReference type="GO" id="GO:0051287">
    <property type="term" value="F:NAD binding"/>
    <property type="evidence" value="ECO:0007669"/>
    <property type="project" value="InterPro"/>
</dbReference>
<dbReference type="GO" id="GO:0070401">
    <property type="term" value="F:NADP+ binding"/>
    <property type="evidence" value="ECO:0007669"/>
    <property type="project" value="InterPro"/>
</dbReference>
<dbReference type="GO" id="GO:0006526">
    <property type="term" value="P:L-arginine biosynthetic process"/>
    <property type="evidence" value="ECO:0007669"/>
    <property type="project" value="UniProtKB-UniRule"/>
</dbReference>
<dbReference type="CDD" id="cd23934">
    <property type="entry name" value="AGPR_1_C"/>
    <property type="match status" value="1"/>
</dbReference>
<dbReference type="CDD" id="cd17895">
    <property type="entry name" value="AGPR_1_N"/>
    <property type="match status" value="1"/>
</dbReference>
<dbReference type="Gene3D" id="3.30.360.10">
    <property type="entry name" value="Dihydrodipicolinate Reductase, domain 2"/>
    <property type="match status" value="1"/>
</dbReference>
<dbReference type="Gene3D" id="3.40.50.720">
    <property type="entry name" value="NAD(P)-binding Rossmann-like Domain"/>
    <property type="match status" value="1"/>
</dbReference>
<dbReference type="HAMAP" id="MF_00150">
    <property type="entry name" value="ArgC_type1"/>
    <property type="match status" value="1"/>
</dbReference>
<dbReference type="InterPro" id="IPR023013">
    <property type="entry name" value="AGPR_AS"/>
</dbReference>
<dbReference type="InterPro" id="IPR000706">
    <property type="entry name" value="AGPR_type-1"/>
</dbReference>
<dbReference type="InterPro" id="IPR036291">
    <property type="entry name" value="NAD(P)-bd_dom_sf"/>
</dbReference>
<dbReference type="InterPro" id="IPR050085">
    <property type="entry name" value="NAGSA_dehydrogenase"/>
</dbReference>
<dbReference type="InterPro" id="IPR000534">
    <property type="entry name" value="Semialdehyde_DH_NAD-bd"/>
</dbReference>
<dbReference type="NCBIfam" id="TIGR01850">
    <property type="entry name" value="argC"/>
    <property type="match status" value="1"/>
</dbReference>
<dbReference type="PANTHER" id="PTHR32338:SF10">
    <property type="entry name" value="N-ACETYL-GAMMA-GLUTAMYL-PHOSPHATE REDUCTASE, CHLOROPLASTIC-RELATED"/>
    <property type="match status" value="1"/>
</dbReference>
<dbReference type="PANTHER" id="PTHR32338">
    <property type="entry name" value="N-ACETYL-GAMMA-GLUTAMYL-PHOSPHATE REDUCTASE, CHLOROPLASTIC-RELATED-RELATED"/>
    <property type="match status" value="1"/>
</dbReference>
<dbReference type="Pfam" id="PF01118">
    <property type="entry name" value="Semialdhyde_dh"/>
    <property type="match status" value="1"/>
</dbReference>
<dbReference type="Pfam" id="PF22698">
    <property type="entry name" value="Semialdhyde_dhC_1"/>
    <property type="match status" value="1"/>
</dbReference>
<dbReference type="SMART" id="SM00859">
    <property type="entry name" value="Semialdhyde_dh"/>
    <property type="match status" value="1"/>
</dbReference>
<dbReference type="SUPFAM" id="SSF55347">
    <property type="entry name" value="Glyceraldehyde-3-phosphate dehydrogenase-like, C-terminal domain"/>
    <property type="match status" value="1"/>
</dbReference>
<dbReference type="SUPFAM" id="SSF51735">
    <property type="entry name" value="NAD(P)-binding Rossmann-fold domains"/>
    <property type="match status" value="1"/>
</dbReference>
<dbReference type="PROSITE" id="PS01224">
    <property type="entry name" value="ARGC"/>
    <property type="match status" value="1"/>
</dbReference>
<accession>Q9JVU6</accession>
<accession>A1IQA7</accession>
<reference key="1">
    <citation type="journal article" date="2000" name="Nature">
        <title>Complete DNA sequence of a serogroup A strain of Neisseria meningitidis Z2491.</title>
        <authorList>
            <person name="Parkhill J."/>
            <person name="Achtman M."/>
            <person name="James K.D."/>
            <person name="Bentley S.D."/>
            <person name="Churcher C.M."/>
            <person name="Klee S.R."/>
            <person name="Morelli G."/>
            <person name="Basham D."/>
            <person name="Brown D."/>
            <person name="Chillingworth T."/>
            <person name="Davies R.M."/>
            <person name="Davis P."/>
            <person name="Devlin K."/>
            <person name="Feltwell T."/>
            <person name="Hamlin N."/>
            <person name="Holroyd S."/>
            <person name="Jagels K."/>
            <person name="Leather S."/>
            <person name="Moule S."/>
            <person name="Mungall K.L."/>
            <person name="Quail M.A."/>
            <person name="Rajandream M.A."/>
            <person name="Rutherford K.M."/>
            <person name="Simmonds M."/>
            <person name="Skelton J."/>
            <person name="Whitehead S."/>
            <person name="Spratt B.G."/>
            <person name="Barrell B.G."/>
        </authorList>
    </citation>
    <scope>NUCLEOTIDE SEQUENCE [LARGE SCALE GENOMIC DNA]</scope>
    <source>
        <strain>DSM 15465 / Z2491</strain>
    </source>
</reference>
<gene>
    <name evidence="1" type="primary">argC</name>
    <name type="ordered locus">NMA0676</name>
</gene>
<keyword id="KW-0028">Amino-acid biosynthesis</keyword>
<keyword id="KW-0055">Arginine biosynthesis</keyword>
<keyword id="KW-0963">Cytoplasm</keyword>
<keyword id="KW-0521">NADP</keyword>
<keyword id="KW-0560">Oxidoreductase</keyword>
<organism>
    <name type="scientific">Neisseria meningitidis serogroup A / serotype 4A (strain DSM 15465 / Z2491)</name>
    <dbReference type="NCBI Taxonomy" id="122587"/>
    <lineage>
        <taxon>Bacteria</taxon>
        <taxon>Pseudomonadati</taxon>
        <taxon>Pseudomonadota</taxon>
        <taxon>Betaproteobacteria</taxon>
        <taxon>Neisseriales</taxon>
        <taxon>Neisseriaceae</taxon>
        <taxon>Neisseria</taxon>
    </lineage>
</organism>
<comment type="function">
    <text evidence="1">Catalyzes the NADPH-dependent reduction of N-acetyl-5-glutamyl phosphate to yield N-acetyl-L-glutamate 5-semialdehyde.</text>
</comment>
<comment type="catalytic activity">
    <reaction evidence="1">
        <text>N-acetyl-L-glutamate 5-semialdehyde + phosphate + NADP(+) = N-acetyl-L-glutamyl 5-phosphate + NADPH + H(+)</text>
        <dbReference type="Rhea" id="RHEA:21588"/>
        <dbReference type="ChEBI" id="CHEBI:15378"/>
        <dbReference type="ChEBI" id="CHEBI:29123"/>
        <dbReference type="ChEBI" id="CHEBI:43474"/>
        <dbReference type="ChEBI" id="CHEBI:57783"/>
        <dbReference type="ChEBI" id="CHEBI:57936"/>
        <dbReference type="ChEBI" id="CHEBI:58349"/>
        <dbReference type="EC" id="1.2.1.38"/>
    </reaction>
</comment>
<comment type="pathway">
    <text evidence="1">Amino-acid biosynthesis; L-arginine biosynthesis; N(2)-acetyl-L-ornithine from L-glutamate: step 3/4.</text>
</comment>
<comment type="subcellular location">
    <subcellularLocation>
        <location evidence="1">Cytoplasm</location>
    </subcellularLocation>
</comment>
<comment type="similarity">
    <text evidence="1">Belongs to the NAGSA dehydrogenase family. Type 1 subfamily.</text>
</comment>
<protein>
    <recommendedName>
        <fullName evidence="1">N-acetyl-gamma-glutamyl-phosphate reductase</fullName>
        <shortName evidence="1">AGPR</shortName>
        <ecNumber evidence="1">1.2.1.38</ecNumber>
    </recommendedName>
    <alternativeName>
        <fullName evidence="1">N-acetyl-glutamate semialdehyde dehydrogenase</fullName>
        <shortName evidence="1">NAGSA dehydrogenase</shortName>
    </alternativeName>
</protein>
<feature type="chain" id="PRO_0000112427" description="N-acetyl-gamma-glutamyl-phosphate reductase">
    <location>
        <begin position="1"/>
        <end position="347"/>
    </location>
</feature>
<feature type="active site" evidence="1">
    <location>
        <position position="152"/>
    </location>
</feature>
<name>ARGC_NEIMA</name>